<protein>
    <recommendedName>
        <fullName evidence="4">Cytochrome P450 monooxygenase FrzL</fullName>
        <ecNumber evidence="3">1.-.-.-</ecNumber>
    </recommendedName>
    <alternativeName>
        <fullName evidence="4">FR901483 biosynthesis cluster protein L</fullName>
    </alternativeName>
</protein>
<keyword id="KW-0349">Heme</keyword>
<keyword id="KW-0408">Iron</keyword>
<keyword id="KW-0472">Membrane</keyword>
<keyword id="KW-0479">Metal-binding</keyword>
<keyword id="KW-0503">Monooxygenase</keyword>
<keyword id="KW-0560">Oxidoreductase</keyword>
<keyword id="KW-0812">Transmembrane</keyword>
<keyword id="KW-1133">Transmembrane helix</keyword>
<comment type="function">
    <text evidence="3">Cytochrome P450 monooxygenase; part of the gene cluster that mediates the biosynthesis of the alkaloid (-)-FR901483, a potent immunosuppressant that shows efficacy in animal models and a probable inhibitor of purine nucleotide biosynthesis by targeting phosphoribosylpyrophosphate amidotransferase (PPAT) (PubMed:33372776). The only unassigned enzyme in the cluster is the second cytochrome P450 monooxygenase FrzL (PubMed:33372776). The biosynthesis of (-)-FR901483 starts with the condensation of two L-tyrosines to yield (S,S)-dityrosyl-piperazine. This process occurs in 3 steps with the non-canonical nonribosomal peptide synthetase FrzA catalyzing the reduction of L-tyrosine into L-tyrosinal, the spontaneous condensation of 2 L-tyrosinal units, and the subsequent reduction by the NmrA-like family domain-containing oxidoreductase FrzB. The cytochrome P450 monooxygenase FrzC then performs coupling between N10 and C1' to morph the piperazine into a 1,4-diazabicyclo[3.2.1]octane spiro-fused to a 2,5-cyclohexadienone. The dienone portion is further reduced to cyclohexanone by the flavin-dependent reductase FrzD. The methyltranserases (MTs) FrzE and FrzF are then involved in the methylation at the C10' amine and the C4 phenolic oxygen, respectively. The order of the two MTs appear to be interchangeable. Cleavage of the C9-N10' bond by the dioxygenase FrzG then leads to formation of a conjugated iminium. In addition to the oxidation of C9, an additional dehydrogenation between C7 and C8 can occur to give a likely shunt product. The next biosynthetic step is the intramolecular aldol condensation catalyzed by the newly identified aldolase FrzH to yield an aza-tricyclic product with the formation of a C9-C3' bond (PubMed:33372776). The short-chain dehydrogenase/reductase FrzI then produces dephospho-(-)-FR901483 that is phosphorylated at C4'-OH into (-)-FR901483 by the phosphotransferase FrzJ (PubMed:33372776).</text>
</comment>
<comment type="cofactor">
    <cofactor evidence="1">
        <name>heme</name>
        <dbReference type="ChEBI" id="CHEBI:30413"/>
    </cofactor>
</comment>
<comment type="subcellular location">
    <subcellularLocation>
        <location evidence="2">Membrane</location>
        <topology evidence="2">Single-pass membrane protein</topology>
    </subcellularLocation>
</comment>
<comment type="similarity">
    <text evidence="5">Belongs to the cytochrome P450 family.</text>
</comment>
<accession>A0A7T8F1L2</accession>
<name>FRZL_CLASX</name>
<evidence type="ECO:0000250" key="1">
    <source>
        <dbReference type="UniProtKB" id="P04798"/>
    </source>
</evidence>
<evidence type="ECO:0000255" key="2"/>
<evidence type="ECO:0000269" key="3">
    <source>
    </source>
</evidence>
<evidence type="ECO:0000303" key="4">
    <source>
    </source>
</evidence>
<evidence type="ECO:0000305" key="5"/>
<dbReference type="EC" id="1.-.-.-" evidence="3"/>
<dbReference type="EMBL" id="MW322046">
    <property type="protein sequence ID" value="QQO98481.1"/>
    <property type="molecule type" value="Genomic_DNA"/>
</dbReference>
<dbReference type="GO" id="GO:0016020">
    <property type="term" value="C:membrane"/>
    <property type="evidence" value="ECO:0007669"/>
    <property type="project" value="UniProtKB-KW"/>
</dbReference>
<dbReference type="GO" id="GO:0020037">
    <property type="term" value="F:heme binding"/>
    <property type="evidence" value="ECO:0007669"/>
    <property type="project" value="InterPro"/>
</dbReference>
<dbReference type="GO" id="GO:0005506">
    <property type="term" value="F:iron ion binding"/>
    <property type="evidence" value="ECO:0007669"/>
    <property type="project" value="InterPro"/>
</dbReference>
<dbReference type="GO" id="GO:0004497">
    <property type="term" value="F:monooxygenase activity"/>
    <property type="evidence" value="ECO:0007669"/>
    <property type="project" value="UniProtKB-KW"/>
</dbReference>
<dbReference type="GO" id="GO:0016705">
    <property type="term" value="F:oxidoreductase activity, acting on paired donors, with incorporation or reduction of molecular oxygen"/>
    <property type="evidence" value="ECO:0007669"/>
    <property type="project" value="InterPro"/>
</dbReference>
<dbReference type="CDD" id="cd11065">
    <property type="entry name" value="CYP64-like"/>
    <property type="match status" value="1"/>
</dbReference>
<dbReference type="Gene3D" id="1.10.630.10">
    <property type="entry name" value="Cytochrome P450"/>
    <property type="match status" value="1"/>
</dbReference>
<dbReference type="InterPro" id="IPR001128">
    <property type="entry name" value="Cyt_P450"/>
</dbReference>
<dbReference type="InterPro" id="IPR017972">
    <property type="entry name" value="Cyt_P450_CS"/>
</dbReference>
<dbReference type="InterPro" id="IPR002401">
    <property type="entry name" value="Cyt_P450_E_grp-I"/>
</dbReference>
<dbReference type="InterPro" id="IPR036396">
    <property type="entry name" value="Cyt_P450_sf"/>
</dbReference>
<dbReference type="InterPro" id="IPR050364">
    <property type="entry name" value="Cytochrome_P450_fung"/>
</dbReference>
<dbReference type="PANTHER" id="PTHR46300:SF1">
    <property type="entry name" value="P450, PUTATIVE (EUROFUNG)-RELATED"/>
    <property type="match status" value="1"/>
</dbReference>
<dbReference type="PANTHER" id="PTHR46300">
    <property type="entry name" value="P450, PUTATIVE (EUROFUNG)-RELATED-RELATED"/>
    <property type="match status" value="1"/>
</dbReference>
<dbReference type="Pfam" id="PF00067">
    <property type="entry name" value="p450"/>
    <property type="match status" value="1"/>
</dbReference>
<dbReference type="PRINTS" id="PR00463">
    <property type="entry name" value="EP450I"/>
</dbReference>
<dbReference type="PRINTS" id="PR00385">
    <property type="entry name" value="P450"/>
</dbReference>
<dbReference type="SUPFAM" id="SSF48264">
    <property type="entry name" value="Cytochrome P450"/>
    <property type="match status" value="1"/>
</dbReference>
<dbReference type="PROSITE" id="PS00086">
    <property type="entry name" value="CYTOCHROME_P450"/>
    <property type="match status" value="1"/>
</dbReference>
<dbReference type="PROSITE" id="PS51257">
    <property type="entry name" value="PROKAR_LIPOPROTEIN"/>
    <property type="match status" value="1"/>
</dbReference>
<organism>
    <name type="scientific">Cladobotryum sp</name>
    <dbReference type="NCBI Taxonomy" id="2040732"/>
    <lineage>
        <taxon>Eukaryota</taxon>
        <taxon>Fungi</taxon>
        <taxon>Dikarya</taxon>
        <taxon>Ascomycota</taxon>
        <taxon>Pezizomycotina</taxon>
        <taxon>Sordariomycetes</taxon>
        <taxon>Hypocreomycetidae</taxon>
        <taxon>Hypocreales</taxon>
        <taxon>Hypocreaceae</taxon>
        <taxon>Cladobotryum</taxon>
    </lineage>
</organism>
<reference key="1">
    <citation type="journal article" date="2021" name="J. Am. Chem. Soc.">
        <title>Biosynthesis of the Immunosuppressant (-)-FR901483.</title>
        <authorList>
            <person name="Zhang Z."/>
            <person name="Tamura Y."/>
            <person name="Tang M."/>
            <person name="Qiao T."/>
            <person name="Sato M."/>
            <person name="Otsu Y."/>
            <person name="Sasamura S."/>
            <person name="Taniguchi M."/>
            <person name="Watanabe K."/>
            <person name="Tang Y."/>
        </authorList>
    </citation>
    <scope>NUCLEOTIDE SEQUENCE [GENOMIC DNA]</scope>
    <scope>FUNCTION</scope>
    <source>
        <strain>11231</strain>
    </source>
</reference>
<proteinExistence type="inferred from homology"/>
<sequence>MYYRETMLAFVPYLAVFVACYGLVYYRRKRQRLPLPPGPPQLPLVGNLYQIPEMNPWRTYREWHQKYGPIITVKSGLTNTIILGSHKAARDLLDKRNRNYGSRPHFILIGDFIYGGNQTSLLPTGQRWRIHRRILSAFGNVRTSQRYRILYDAESKRLLREILHGGDFFEPFHHYFVRILFALTYGKRVTGSHDPEARDVIEIVDVVLKEASRSSVPEAFPILNSLPGALAPWKRRAQLLFEQHSRLFDNHMNAALANKPWNFCKQALRLKASSEVDRVELNFILGSITEATHSGSMVLGVFIMANILHPDAVRWVQEEIDRVIGPDRLPSFDDMAKLPYLNAYLLEVMRWRPITPGGMPHASFQDDEYMGYHIPKGTTVVANHWSMDFDESVFTDPYEFRPQRWIEDPNLPSIAFGFGTRICPGRHIAESSIFIVAARLLWSFNFDYAYEDGKRQEIDSWNMTQGLDSGPMPFKASFKIRSPKHQEVMDRECGVSDLDIDAILDKIGADFL</sequence>
<feature type="chain" id="PRO_0000462331" description="Cytochrome P450 monooxygenase FrzL">
    <location>
        <begin position="1"/>
        <end position="512"/>
    </location>
</feature>
<feature type="transmembrane region" description="Helical" evidence="2">
    <location>
        <begin position="6"/>
        <end position="26"/>
    </location>
</feature>
<feature type="binding site" description="axial binding residue" evidence="1">
    <location>
        <position position="423"/>
    </location>
    <ligand>
        <name>heme</name>
        <dbReference type="ChEBI" id="CHEBI:30413"/>
    </ligand>
    <ligandPart>
        <name>Fe</name>
        <dbReference type="ChEBI" id="CHEBI:18248"/>
    </ligandPart>
</feature>